<sequence length="68" mass="7899">MTLEMRMVELETRQAFQDDAIQALNDVVVEQARVIERLQLQMAELIKRHEEMVGQYGSEGEEAPPPHY</sequence>
<accession>A5VZT8</accession>
<organism>
    <name type="scientific">Pseudomonas putida (strain ATCC 700007 / DSM 6899 / JCM 31910 / BCRC 17059 / LMG 24140 / F1)</name>
    <dbReference type="NCBI Taxonomy" id="351746"/>
    <lineage>
        <taxon>Bacteria</taxon>
        <taxon>Pseudomonadati</taxon>
        <taxon>Pseudomonadota</taxon>
        <taxon>Gammaproteobacteria</taxon>
        <taxon>Pseudomonadales</taxon>
        <taxon>Pseudomonadaceae</taxon>
        <taxon>Pseudomonas</taxon>
    </lineage>
</organism>
<comment type="similarity">
    <text evidence="1">Belongs to the SlyX family.</text>
</comment>
<reference key="1">
    <citation type="submission" date="2007-05" db="EMBL/GenBank/DDBJ databases">
        <title>Complete sequence of Pseudomonas putida F1.</title>
        <authorList>
            <consortium name="US DOE Joint Genome Institute"/>
            <person name="Copeland A."/>
            <person name="Lucas S."/>
            <person name="Lapidus A."/>
            <person name="Barry K."/>
            <person name="Detter J.C."/>
            <person name="Glavina del Rio T."/>
            <person name="Hammon N."/>
            <person name="Israni S."/>
            <person name="Dalin E."/>
            <person name="Tice H."/>
            <person name="Pitluck S."/>
            <person name="Chain P."/>
            <person name="Malfatti S."/>
            <person name="Shin M."/>
            <person name="Vergez L."/>
            <person name="Schmutz J."/>
            <person name="Larimer F."/>
            <person name="Land M."/>
            <person name="Hauser L."/>
            <person name="Kyrpides N."/>
            <person name="Lykidis A."/>
            <person name="Parales R."/>
            <person name="Richardson P."/>
        </authorList>
    </citation>
    <scope>NUCLEOTIDE SEQUENCE [LARGE SCALE GENOMIC DNA]</scope>
    <source>
        <strain>ATCC 700007 / DSM 6899 / JCM 31910 / BCRC 17059 / LMG 24140 / F1</strain>
    </source>
</reference>
<feature type="chain" id="PRO_1000045728" description="Protein SlyX homolog">
    <location>
        <begin position="1"/>
        <end position="68"/>
    </location>
</feature>
<gene>
    <name evidence="1" type="primary">slyX</name>
    <name type="ordered locus">Pput_1237</name>
</gene>
<evidence type="ECO:0000255" key="1">
    <source>
        <dbReference type="HAMAP-Rule" id="MF_00715"/>
    </source>
</evidence>
<dbReference type="EMBL" id="CP000712">
    <property type="protein sequence ID" value="ABQ77398.1"/>
    <property type="molecule type" value="Genomic_DNA"/>
</dbReference>
<dbReference type="SMR" id="A5VZT8"/>
<dbReference type="KEGG" id="ppf:Pput_1237"/>
<dbReference type="eggNOG" id="COG2900">
    <property type="taxonomic scope" value="Bacteria"/>
</dbReference>
<dbReference type="HOGENOM" id="CLU_180796_4_1_6"/>
<dbReference type="Gene3D" id="1.20.5.300">
    <property type="match status" value="1"/>
</dbReference>
<dbReference type="HAMAP" id="MF_00715">
    <property type="entry name" value="SlyX"/>
    <property type="match status" value="1"/>
</dbReference>
<dbReference type="InterPro" id="IPR007236">
    <property type="entry name" value="SlyX"/>
</dbReference>
<dbReference type="NCBIfam" id="NF001421">
    <property type="entry name" value="PRK00295.1"/>
    <property type="match status" value="1"/>
</dbReference>
<dbReference type="PANTHER" id="PTHR36508">
    <property type="entry name" value="PROTEIN SLYX"/>
    <property type="match status" value="1"/>
</dbReference>
<dbReference type="PANTHER" id="PTHR36508:SF1">
    <property type="entry name" value="PROTEIN SLYX"/>
    <property type="match status" value="1"/>
</dbReference>
<dbReference type="Pfam" id="PF04102">
    <property type="entry name" value="SlyX"/>
    <property type="match status" value="1"/>
</dbReference>
<protein>
    <recommendedName>
        <fullName evidence="1">Protein SlyX homolog</fullName>
    </recommendedName>
</protein>
<proteinExistence type="inferred from homology"/>
<name>SLYX_PSEP1</name>